<keyword id="KW-0963">Cytoplasm</keyword>
<keyword id="KW-0396">Initiation factor</keyword>
<keyword id="KW-0648">Protein biosynthesis</keyword>
<keyword id="KW-1185">Reference proteome</keyword>
<dbReference type="EMBL" id="AE017353">
    <property type="protein sequence ID" value="AAW46818.1"/>
    <property type="molecule type" value="Genomic_DNA"/>
</dbReference>
<dbReference type="RefSeq" id="XP_568335.1">
    <property type="nucleotide sequence ID" value="XM_568335.1"/>
</dbReference>
<dbReference type="SMR" id="P0CN50"/>
<dbReference type="FunCoup" id="P0CN50">
    <property type="interactions" value="886"/>
</dbReference>
<dbReference type="STRING" id="214684.P0CN50"/>
<dbReference type="PaxDb" id="214684-P0CN50"/>
<dbReference type="EnsemblFungi" id="AAW46818">
    <property type="protein sequence ID" value="AAW46818"/>
    <property type="gene ID" value="CNM00700"/>
</dbReference>
<dbReference type="GeneID" id="3255149"/>
<dbReference type="KEGG" id="cne:CNM00700"/>
<dbReference type="VEuPathDB" id="FungiDB:CNM00700"/>
<dbReference type="eggNOG" id="KOG2758">
    <property type="taxonomic scope" value="Eukaryota"/>
</dbReference>
<dbReference type="HOGENOM" id="CLU_031132_0_0_1"/>
<dbReference type="InParanoid" id="P0CN50"/>
<dbReference type="OMA" id="NCPWILR"/>
<dbReference type="OrthoDB" id="417252at2759"/>
<dbReference type="Proteomes" id="UP000002149">
    <property type="component" value="Chromosome 13"/>
</dbReference>
<dbReference type="GO" id="GO:0016282">
    <property type="term" value="C:eukaryotic 43S preinitiation complex"/>
    <property type="evidence" value="ECO:0007669"/>
    <property type="project" value="UniProtKB-UniRule"/>
</dbReference>
<dbReference type="GO" id="GO:0033290">
    <property type="term" value="C:eukaryotic 48S preinitiation complex"/>
    <property type="evidence" value="ECO:0007669"/>
    <property type="project" value="UniProtKB-UniRule"/>
</dbReference>
<dbReference type="GO" id="GO:0005852">
    <property type="term" value="C:eukaryotic translation initiation factor 3 complex"/>
    <property type="evidence" value="ECO:0000318"/>
    <property type="project" value="GO_Central"/>
</dbReference>
<dbReference type="GO" id="GO:0071540">
    <property type="term" value="C:eukaryotic translation initiation factor 3 complex, eIF3e"/>
    <property type="evidence" value="ECO:0007669"/>
    <property type="project" value="UniProtKB-UniRule"/>
</dbReference>
<dbReference type="GO" id="GO:0005634">
    <property type="term" value="C:nucleus"/>
    <property type="evidence" value="ECO:0000318"/>
    <property type="project" value="GO_Central"/>
</dbReference>
<dbReference type="GO" id="GO:0003743">
    <property type="term" value="F:translation initiation factor activity"/>
    <property type="evidence" value="ECO:0007669"/>
    <property type="project" value="UniProtKB-UniRule"/>
</dbReference>
<dbReference type="GO" id="GO:0001732">
    <property type="term" value="P:formation of cytoplasmic translation initiation complex"/>
    <property type="evidence" value="ECO:0007669"/>
    <property type="project" value="UniProtKB-UniRule"/>
</dbReference>
<dbReference type="GO" id="GO:0006413">
    <property type="term" value="P:translational initiation"/>
    <property type="evidence" value="ECO:0000318"/>
    <property type="project" value="GO_Central"/>
</dbReference>
<dbReference type="CDD" id="cd21378">
    <property type="entry name" value="eIF3E"/>
    <property type="match status" value="1"/>
</dbReference>
<dbReference type="HAMAP" id="MF_03004">
    <property type="entry name" value="eIF3e"/>
    <property type="match status" value="1"/>
</dbReference>
<dbReference type="InterPro" id="IPR016650">
    <property type="entry name" value="eIF3e"/>
</dbReference>
<dbReference type="InterPro" id="IPR019010">
    <property type="entry name" value="eIF3e_N"/>
</dbReference>
<dbReference type="InterPro" id="IPR000717">
    <property type="entry name" value="PCI_dom"/>
</dbReference>
<dbReference type="InterPro" id="IPR036390">
    <property type="entry name" value="WH_DNA-bd_sf"/>
</dbReference>
<dbReference type="PANTHER" id="PTHR10317">
    <property type="entry name" value="EUKARYOTIC TRANSLATION INITIATION FACTOR 3 SUBUNIT E"/>
    <property type="match status" value="1"/>
</dbReference>
<dbReference type="Pfam" id="PF09440">
    <property type="entry name" value="eIF3_N"/>
    <property type="match status" value="1"/>
</dbReference>
<dbReference type="Pfam" id="PF01399">
    <property type="entry name" value="PCI"/>
    <property type="match status" value="1"/>
</dbReference>
<dbReference type="PIRSF" id="PIRSF016255">
    <property type="entry name" value="eIF3e_su6"/>
    <property type="match status" value="1"/>
</dbReference>
<dbReference type="SMART" id="SM01186">
    <property type="entry name" value="eIF3_N"/>
    <property type="match status" value="1"/>
</dbReference>
<dbReference type="SUPFAM" id="SSF46785">
    <property type="entry name" value="Winged helix' DNA-binding domain"/>
    <property type="match status" value="1"/>
</dbReference>
<dbReference type="PROSITE" id="PS50250">
    <property type="entry name" value="PCI"/>
    <property type="match status" value="1"/>
</dbReference>
<reference key="1">
    <citation type="journal article" date="2005" name="Science">
        <title>The genome of the basidiomycetous yeast and human pathogen Cryptococcus neoformans.</title>
        <authorList>
            <person name="Loftus B.J."/>
            <person name="Fung E."/>
            <person name="Roncaglia P."/>
            <person name="Rowley D."/>
            <person name="Amedeo P."/>
            <person name="Bruno D."/>
            <person name="Vamathevan J."/>
            <person name="Miranda M."/>
            <person name="Anderson I.J."/>
            <person name="Fraser J.A."/>
            <person name="Allen J.E."/>
            <person name="Bosdet I.E."/>
            <person name="Brent M.R."/>
            <person name="Chiu R."/>
            <person name="Doering T.L."/>
            <person name="Donlin M.J."/>
            <person name="D'Souza C.A."/>
            <person name="Fox D.S."/>
            <person name="Grinberg V."/>
            <person name="Fu J."/>
            <person name="Fukushima M."/>
            <person name="Haas B.J."/>
            <person name="Huang J.C."/>
            <person name="Janbon G."/>
            <person name="Jones S.J.M."/>
            <person name="Koo H.L."/>
            <person name="Krzywinski M.I."/>
            <person name="Kwon-Chung K.J."/>
            <person name="Lengeler K.B."/>
            <person name="Maiti R."/>
            <person name="Marra M.A."/>
            <person name="Marra R.E."/>
            <person name="Mathewson C.A."/>
            <person name="Mitchell T.G."/>
            <person name="Pertea M."/>
            <person name="Riggs F.R."/>
            <person name="Salzberg S.L."/>
            <person name="Schein J.E."/>
            <person name="Shvartsbeyn A."/>
            <person name="Shin H."/>
            <person name="Shumway M."/>
            <person name="Specht C.A."/>
            <person name="Suh B.B."/>
            <person name="Tenney A."/>
            <person name="Utterback T.R."/>
            <person name="Wickes B.L."/>
            <person name="Wortman J.R."/>
            <person name="Wye N.H."/>
            <person name="Kronstad J.W."/>
            <person name="Lodge J.K."/>
            <person name="Heitman J."/>
            <person name="Davis R.W."/>
            <person name="Fraser C.M."/>
            <person name="Hyman R.W."/>
        </authorList>
    </citation>
    <scope>NUCLEOTIDE SEQUENCE [LARGE SCALE GENOMIC DNA]</scope>
    <source>
        <strain>JEC21 / ATCC MYA-565</strain>
    </source>
</reference>
<gene>
    <name evidence="1" type="primary">INT6</name>
    <name type="ordered locus">CNM00700</name>
</gene>
<comment type="function">
    <text evidence="1">Component of the eukaryotic translation initiation factor 3 (eIF-3) complex, which is involved in protein synthesis of a specialized repertoire of mRNAs and, together with other initiation factors, stimulates binding of mRNA and methionyl-tRNAi to the 40S ribosome. The eIF-3 complex specifically targets and initiates translation of a subset of mRNAs involved in cell proliferation.</text>
</comment>
<comment type="subunit">
    <text evidence="1">Component of the eukaryotic translation initiation factor 3 (eIF-3) complex.</text>
</comment>
<comment type="subcellular location">
    <subcellularLocation>
        <location evidence="1">Cytoplasm</location>
    </subcellularLocation>
</comment>
<comment type="similarity">
    <text evidence="1">Belongs to the eIF-3 subunit E family.</text>
</comment>
<name>EIF3E_CRYNJ</name>
<accession>P0CN50</accession>
<accession>Q55IG0</accession>
<accession>Q5K7Z9</accession>
<evidence type="ECO:0000255" key="1">
    <source>
        <dbReference type="HAMAP-Rule" id="MF_03004"/>
    </source>
</evidence>
<evidence type="ECO:0000255" key="2">
    <source>
        <dbReference type="PROSITE-ProRule" id="PRU01185"/>
    </source>
</evidence>
<evidence type="ECO:0000256" key="3">
    <source>
        <dbReference type="SAM" id="MobiDB-lite"/>
    </source>
</evidence>
<sequence>MADYDLTQKLIPHLDRHLAIPLLNHLSDIAIYPAEQLARAQYDLAKGTNMVNYVEQFHAQIENAEPTDFARLRDEATAKYQELQEKAQPVTKVIEDPDAVAKLRSGGDKDRNLDLLRSEYQIDIDQINALYHFGQYQYSLGDYGSAGNLLYHFLILSPSYELNISAQWGKLASNILNGEWDAALMQVRDLRETIDNPHGTSLAKPLAQLQARTWLLHWSLFVFFNLGENQGCQGLLDMFLSPAYLNTIQTSCPHLLRYLVAAAIISRRAPKPANVRSRDHVKELTRIVETEEYQYTDPITSFLKDVFADFDLTQAQQRLSVAESVVRSDFFLSGFADEFVENARWLISEVICRLHRRIDIGQLSKTLNLSNEEGEKWIVNLIRDSRMGVEAKIDLKENMLHITRPHATPTATLIETTRGLAFRSQAIQFAMQSSVGEPRERGERGERGNKGGRGRPRTQEVAA</sequence>
<feature type="chain" id="PRO_0000365986" description="Eukaryotic translation initiation factor 3 subunit E">
    <location>
        <begin position="1"/>
        <end position="463"/>
    </location>
</feature>
<feature type="domain" description="PCI" evidence="2">
    <location>
        <begin position="224"/>
        <end position="407"/>
    </location>
</feature>
<feature type="region of interest" description="Disordered" evidence="3">
    <location>
        <begin position="432"/>
        <end position="463"/>
    </location>
</feature>
<feature type="compositionally biased region" description="Basic and acidic residues" evidence="3">
    <location>
        <begin position="437"/>
        <end position="449"/>
    </location>
</feature>
<protein>
    <recommendedName>
        <fullName evidence="1">Eukaryotic translation initiation factor 3 subunit E</fullName>
        <shortName evidence="1">eIF3e</shortName>
    </recommendedName>
</protein>
<organism>
    <name type="scientific">Cryptococcus neoformans var. neoformans serotype D (strain JEC21 / ATCC MYA-565)</name>
    <name type="common">Filobasidiella neoformans</name>
    <dbReference type="NCBI Taxonomy" id="214684"/>
    <lineage>
        <taxon>Eukaryota</taxon>
        <taxon>Fungi</taxon>
        <taxon>Dikarya</taxon>
        <taxon>Basidiomycota</taxon>
        <taxon>Agaricomycotina</taxon>
        <taxon>Tremellomycetes</taxon>
        <taxon>Tremellales</taxon>
        <taxon>Cryptococcaceae</taxon>
        <taxon>Cryptococcus</taxon>
        <taxon>Cryptococcus neoformans species complex</taxon>
    </lineage>
</organism>
<proteinExistence type="inferred from homology"/>